<proteinExistence type="inferred from homology"/>
<comment type="function">
    <text evidence="1">One of the essential components for the initiation of protein synthesis. Stabilizes the binding of IF-2 and IF-3 on the 30S subunit to which N-formylmethionyl-tRNA(fMet) subsequently binds. Helps modulate mRNA selection, yielding the 30S pre-initiation complex (PIC). Upon addition of the 50S ribosomal subunit IF-1, IF-2 and IF-3 are released leaving the mature 70S translation initiation complex.</text>
</comment>
<comment type="subunit">
    <text evidence="1">Component of the 30S ribosomal translation pre-initiation complex which assembles on the 30S ribosome in the order IF-2 and IF-3, IF-1 and N-formylmethionyl-tRNA(fMet); mRNA recruitment can occur at any time during PIC assembly.</text>
</comment>
<comment type="subcellular location">
    <subcellularLocation>
        <location evidence="1">Cytoplasm</location>
    </subcellularLocation>
</comment>
<comment type="similarity">
    <text evidence="1">Belongs to the IF-1 family.</text>
</comment>
<evidence type="ECO:0000255" key="1">
    <source>
        <dbReference type="HAMAP-Rule" id="MF_00075"/>
    </source>
</evidence>
<evidence type="ECO:0000256" key="2">
    <source>
        <dbReference type="SAM" id="MobiDB-lite"/>
    </source>
</evidence>
<keyword id="KW-0963">Cytoplasm</keyword>
<keyword id="KW-0396">Initiation factor</keyword>
<keyword id="KW-0648">Protein biosynthesis</keyword>
<keyword id="KW-0694">RNA-binding</keyword>
<keyword id="KW-0699">rRNA-binding</keyword>
<name>IF1_RHOPA</name>
<dbReference type="EMBL" id="BX572604">
    <property type="protein sequence ID" value="CAE29112.1"/>
    <property type="molecule type" value="Genomic_DNA"/>
</dbReference>
<dbReference type="RefSeq" id="WP_011159210.1">
    <property type="nucleotide sequence ID" value="NZ_CP116810.1"/>
</dbReference>
<dbReference type="SMR" id="P61693"/>
<dbReference type="STRING" id="258594.RPA3671"/>
<dbReference type="GeneID" id="66894777"/>
<dbReference type="eggNOG" id="COG0361">
    <property type="taxonomic scope" value="Bacteria"/>
</dbReference>
<dbReference type="HOGENOM" id="CLU_151267_4_1_5"/>
<dbReference type="PhylomeDB" id="P61693"/>
<dbReference type="GO" id="GO:0005829">
    <property type="term" value="C:cytosol"/>
    <property type="evidence" value="ECO:0007669"/>
    <property type="project" value="TreeGrafter"/>
</dbReference>
<dbReference type="GO" id="GO:0043022">
    <property type="term" value="F:ribosome binding"/>
    <property type="evidence" value="ECO:0007669"/>
    <property type="project" value="UniProtKB-UniRule"/>
</dbReference>
<dbReference type="GO" id="GO:0019843">
    <property type="term" value="F:rRNA binding"/>
    <property type="evidence" value="ECO:0007669"/>
    <property type="project" value="UniProtKB-UniRule"/>
</dbReference>
<dbReference type="GO" id="GO:0003743">
    <property type="term" value="F:translation initiation factor activity"/>
    <property type="evidence" value="ECO:0007669"/>
    <property type="project" value="UniProtKB-UniRule"/>
</dbReference>
<dbReference type="CDD" id="cd04451">
    <property type="entry name" value="S1_IF1"/>
    <property type="match status" value="1"/>
</dbReference>
<dbReference type="FunFam" id="2.40.50.140:FF:000002">
    <property type="entry name" value="Translation initiation factor IF-1"/>
    <property type="match status" value="1"/>
</dbReference>
<dbReference type="Gene3D" id="2.40.50.140">
    <property type="entry name" value="Nucleic acid-binding proteins"/>
    <property type="match status" value="1"/>
</dbReference>
<dbReference type="HAMAP" id="MF_00075">
    <property type="entry name" value="IF_1"/>
    <property type="match status" value="1"/>
</dbReference>
<dbReference type="InterPro" id="IPR012340">
    <property type="entry name" value="NA-bd_OB-fold"/>
</dbReference>
<dbReference type="InterPro" id="IPR006196">
    <property type="entry name" value="RNA-binding_domain_S1_IF1"/>
</dbReference>
<dbReference type="InterPro" id="IPR003029">
    <property type="entry name" value="S1_domain"/>
</dbReference>
<dbReference type="InterPro" id="IPR004368">
    <property type="entry name" value="TIF_IF1"/>
</dbReference>
<dbReference type="NCBIfam" id="TIGR00008">
    <property type="entry name" value="infA"/>
    <property type="match status" value="1"/>
</dbReference>
<dbReference type="PANTHER" id="PTHR33370">
    <property type="entry name" value="TRANSLATION INITIATION FACTOR IF-1, CHLOROPLASTIC"/>
    <property type="match status" value="1"/>
</dbReference>
<dbReference type="PANTHER" id="PTHR33370:SF1">
    <property type="entry name" value="TRANSLATION INITIATION FACTOR IF-1, CHLOROPLASTIC"/>
    <property type="match status" value="1"/>
</dbReference>
<dbReference type="Pfam" id="PF01176">
    <property type="entry name" value="eIF-1a"/>
    <property type="match status" value="1"/>
</dbReference>
<dbReference type="SMART" id="SM00316">
    <property type="entry name" value="S1"/>
    <property type="match status" value="1"/>
</dbReference>
<dbReference type="SUPFAM" id="SSF50249">
    <property type="entry name" value="Nucleic acid-binding proteins"/>
    <property type="match status" value="1"/>
</dbReference>
<dbReference type="PROSITE" id="PS50832">
    <property type="entry name" value="S1_IF1_TYPE"/>
    <property type="match status" value="1"/>
</dbReference>
<protein>
    <recommendedName>
        <fullName evidence="1">Translation initiation factor IF-1</fullName>
    </recommendedName>
</protein>
<organism>
    <name type="scientific">Rhodopseudomonas palustris (strain ATCC BAA-98 / CGA009)</name>
    <dbReference type="NCBI Taxonomy" id="258594"/>
    <lineage>
        <taxon>Bacteria</taxon>
        <taxon>Pseudomonadati</taxon>
        <taxon>Pseudomonadota</taxon>
        <taxon>Alphaproteobacteria</taxon>
        <taxon>Hyphomicrobiales</taxon>
        <taxon>Nitrobacteraceae</taxon>
        <taxon>Rhodopseudomonas</taxon>
    </lineage>
</organism>
<accession>P61693</accession>
<gene>
    <name evidence="1" type="primary">infA</name>
    <name type="ordered locus">RPA3671</name>
</gene>
<feature type="chain" id="PRO_0000095852" description="Translation initiation factor IF-1">
    <location>
        <begin position="1"/>
        <end position="92"/>
    </location>
</feature>
<feature type="domain" description="S1-like" evidence="1">
    <location>
        <begin position="1"/>
        <end position="72"/>
    </location>
</feature>
<feature type="region of interest" description="Disordered" evidence="2">
    <location>
        <begin position="69"/>
        <end position="92"/>
    </location>
</feature>
<sequence>MAKEELIQFEGLVTEILPDARYRVQLDTGHEIVAYTAGKMKKNRIKTLAGDRVTVEMSPYDLEKGRLIFRHKDERPGGPPRSGPPRGQFRRR</sequence>
<reference key="1">
    <citation type="journal article" date="2004" name="Nat. Biotechnol.">
        <title>Complete genome sequence of the metabolically versatile photosynthetic bacterium Rhodopseudomonas palustris.</title>
        <authorList>
            <person name="Larimer F.W."/>
            <person name="Chain P."/>
            <person name="Hauser L."/>
            <person name="Lamerdin J.E."/>
            <person name="Malfatti S."/>
            <person name="Do L."/>
            <person name="Land M.L."/>
            <person name="Pelletier D.A."/>
            <person name="Beatty J.T."/>
            <person name="Lang A.S."/>
            <person name="Tabita F.R."/>
            <person name="Gibson J.L."/>
            <person name="Hanson T.E."/>
            <person name="Bobst C."/>
            <person name="Torres y Torres J.L."/>
            <person name="Peres C."/>
            <person name="Harrison F.H."/>
            <person name="Gibson J."/>
            <person name="Harwood C.S."/>
        </authorList>
    </citation>
    <scope>NUCLEOTIDE SEQUENCE [LARGE SCALE GENOMIC DNA]</scope>
    <source>
        <strain>ATCC BAA-98 / CGA009</strain>
    </source>
</reference>